<protein>
    <recommendedName>
        <fullName evidence="5">Protein-arginine rhamnosyltransferase</fullName>
        <ecNumber evidence="3 6">2.4.1.-</ecNumber>
    </recommendedName>
    <alternativeName>
        <fullName evidence="4">EF-P arginine rhamnosyltransferase</fullName>
    </alternativeName>
</protein>
<accession>Q9HZZ1</accession>
<evidence type="ECO:0000269" key="1">
    <source>
    </source>
</evidence>
<evidence type="ECO:0000269" key="2">
    <source>
    </source>
</evidence>
<evidence type="ECO:0000269" key="3">
    <source>
    </source>
</evidence>
<evidence type="ECO:0000303" key="4">
    <source>
    </source>
</evidence>
<evidence type="ECO:0000305" key="5"/>
<evidence type="ECO:0000305" key="6">
    <source>
    </source>
</evidence>
<evidence type="ECO:0000312" key="7">
    <source>
        <dbReference type="EMBL" id="AAG06240.1"/>
    </source>
</evidence>
<evidence type="ECO:0007744" key="8">
    <source>
        <dbReference type="PDB" id="6J7J"/>
    </source>
</evidence>
<evidence type="ECO:0007744" key="9">
    <source>
        <dbReference type="PDB" id="6J7K"/>
    </source>
</evidence>
<evidence type="ECO:0007744" key="10">
    <source>
        <dbReference type="PDB" id="6J7L"/>
    </source>
</evidence>
<evidence type="ECO:0007744" key="11">
    <source>
        <dbReference type="PDB" id="6J7M"/>
    </source>
</evidence>
<evidence type="ECO:0007829" key="12">
    <source>
        <dbReference type="PDB" id="6J7J"/>
    </source>
</evidence>
<evidence type="ECO:0007829" key="13">
    <source>
        <dbReference type="PDB" id="6J7K"/>
    </source>
</evidence>
<evidence type="ECO:0007829" key="14">
    <source>
        <dbReference type="PDB" id="6J7L"/>
    </source>
</evidence>
<evidence type="ECO:0007829" key="15">
    <source>
        <dbReference type="PDB" id="6J7M"/>
    </source>
</evidence>
<sequence length="376" mass="42787">MASWDIFCSVVDNYGDIGVTWRLARQLAAEHGQAVRLWVDEPQAFARICPRADPVAHVQCLDGVEVRAWGRPWAPVAAADVVIEAFACELPEAHRQAMRERKRPSLWLNLEYLSAEEWIGSCHALPSLQACGLSKYFFFPGFREPSGGLLREAGLLERRRRFQASVSAQDEFLASLGVRRKVGERLISLFAYENPALPGWLEQLRDARQPSLLLVPEGRVLADVADWLRVATLAVGDVHVRDALRVQVLPFMAQDDYDRLLWCCDLNAVRGEDSFVRAQWAGRPLLWHIYRQEEETHLAKLEAFLELYCAGLPADLAENLRTFWLAWNAGGGLAGAWEGLERQLPEWRREAQRWADEQGMRPDLAARLVQFYADWL</sequence>
<feature type="chain" id="PRO_0000452681" description="Protein-arginine rhamnosyltransferase">
    <location>
        <begin position="1"/>
        <end position="376"/>
    </location>
</feature>
<feature type="active site" description="Proton acceptor" evidence="3">
    <location>
        <position position="16"/>
    </location>
</feature>
<feature type="active site" evidence="3">
    <location>
        <position position="272"/>
    </location>
</feature>
<feature type="binding site" evidence="3 9">
    <location>
        <begin position="13"/>
        <end position="16"/>
    </location>
    <ligand>
        <name>dTDP-beta-L-rhamnose</name>
        <dbReference type="ChEBI" id="CHEBI:57510"/>
    </ligand>
</feature>
<feature type="binding site" evidence="3 10 11">
    <location>
        <begin position="14"/>
        <end position="15"/>
    </location>
    <ligand>
        <name>dTDP</name>
        <dbReference type="ChEBI" id="CHEBI:58369"/>
    </ligand>
</feature>
<feature type="binding site" evidence="3 10 11">
    <location>
        <position position="192"/>
    </location>
    <ligand>
        <name>dTDP</name>
        <dbReference type="ChEBI" id="CHEBI:58369"/>
    </ligand>
</feature>
<feature type="binding site" evidence="3 9">
    <location>
        <position position="192"/>
    </location>
    <ligand>
        <name>dTDP-beta-L-rhamnose</name>
        <dbReference type="ChEBI" id="CHEBI:57510"/>
    </ligand>
</feature>
<feature type="binding site" evidence="3 10 11">
    <location>
        <begin position="252"/>
        <end position="254"/>
    </location>
    <ligand>
        <name>dTDP</name>
        <dbReference type="ChEBI" id="CHEBI:58369"/>
    </ligand>
</feature>
<feature type="binding site" evidence="3 9">
    <location>
        <begin position="252"/>
        <end position="254"/>
    </location>
    <ligand>
        <name>dTDP-beta-L-rhamnose</name>
        <dbReference type="ChEBI" id="CHEBI:57510"/>
    </ligand>
</feature>
<feature type="binding site" evidence="3 10 11">
    <location>
        <begin position="270"/>
        <end position="274"/>
    </location>
    <ligand>
        <name>dTDP</name>
        <dbReference type="ChEBI" id="CHEBI:58369"/>
    </ligand>
</feature>
<feature type="binding site" evidence="3 9">
    <location>
        <begin position="270"/>
        <end position="274"/>
    </location>
    <ligand>
        <name>dTDP-beta-L-rhamnose</name>
        <dbReference type="ChEBI" id="CHEBI:57510"/>
    </ligand>
</feature>
<feature type="mutagenesis site" description="Decreased but not abolished protein-arginine rhamnosyltransferase activity." evidence="3">
    <original>D</original>
    <variation>N</variation>
    <location>
        <position position="12"/>
    </location>
</feature>
<feature type="mutagenesis site" description="Abolished protein-arginine rhamnosyltransferase activity." evidence="3">
    <original>D</original>
    <variation>N</variation>
    <location>
        <position position="16"/>
    </location>
</feature>
<feature type="mutagenesis site" description="Decreased but not abolished protein-arginine rhamnosyltransferase activity." evidence="3">
    <original>Y</original>
    <variation>F</variation>
    <location>
        <position position="112"/>
    </location>
</feature>
<feature type="mutagenesis site" description="Abolished protein-arginine rhamnosyltransferase activity." evidence="3">
    <original>E</original>
    <variation>Q</variation>
    <location>
        <position position="272"/>
    </location>
</feature>
<feature type="strand" evidence="12">
    <location>
        <begin position="3"/>
        <end position="8"/>
    </location>
</feature>
<feature type="strand" evidence="14">
    <location>
        <begin position="12"/>
        <end position="14"/>
    </location>
</feature>
<feature type="helix" evidence="12">
    <location>
        <begin position="17"/>
        <end position="31"/>
    </location>
</feature>
<feature type="strand" evidence="12">
    <location>
        <begin position="34"/>
        <end position="40"/>
    </location>
</feature>
<feature type="helix" evidence="12">
    <location>
        <begin position="42"/>
        <end position="48"/>
    </location>
</feature>
<feature type="strand" evidence="12">
    <location>
        <begin position="57"/>
        <end position="61"/>
    </location>
</feature>
<feature type="strand" evidence="12">
    <location>
        <begin position="64"/>
        <end position="68"/>
    </location>
</feature>
<feature type="strand" evidence="12">
    <location>
        <begin position="80"/>
        <end position="85"/>
    </location>
</feature>
<feature type="helix" evidence="12">
    <location>
        <begin position="92"/>
        <end position="100"/>
    </location>
</feature>
<feature type="strand" evidence="12">
    <location>
        <begin position="101"/>
        <end position="103"/>
    </location>
</feature>
<feature type="strand" evidence="12">
    <location>
        <begin position="106"/>
        <end position="110"/>
    </location>
</feature>
<feature type="helix" evidence="12">
    <location>
        <begin position="119"/>
        <end position="122"/>
    </location>
</feature>
<feature type="strand" evidence="12">
    <location>
        <begin position="126"/>
        <end position="128"/>
    </location>
</feature>
<feature type="strand" evidence="12">
    <location>
        <begin position="134"/>
        <end position="138"/>
    </location>
</feature>
<feature type="strand" evidence="12">
    <location>
        <begin position="142"/>
        <end position="146"/>
    </location>
</feature>
<feature type="helix" evidence="12">
    <location>
        <begin position="155"/>
        <end position="163"/>
    </location>
</feature>
<feature type="helix" evidence="12">
    <location>
        <begin position="166"/>
        <end position="175"/>
    </location>
</feature>
<feature type="strand" evidence="12">
    <location>
        <begin position="185"/>
        <end position="189"/>
    </location>
</feature>
<feature type="helix" evidence="12">
    <location>
        <begin position="197"/>
        <end position="206"/>
    </location>
</feature>
<feature type="strand" evidence="12">
    <location>
        <begin position="207"/>
        <end position="209"/>
    </location>
</feature>
<feature type="strand" evidence="12">
    <location>
        <begin position="211"/>
        <end position="218"/>
    </location>
</feature>
<feature type="helix" evidence="12">
    <location>
        <begin position="219"/>
        <end position="228"/>
    </location>
</feature>
<feature type="strand" evidence="12">
    <location>
        <begin position="238"/>
        <end position="241"/>
    </location>
</feature>
<feature type="strand" evidence="12">
    <location>
        <begin position="244"/>
        <end position="249"/>
    </location>
</feature>
<feature type="helix" evidence="12">
    <location>
        <begin position="254"/>
        <end position="263"/>
    </location>
</feature>
<feature type="strand" evidence="12">
    <location>
        <begin position="265"/>
        <end position="271"/>
    </location>
</feature>
<feature type="helix" evidence="12">
    <location>
        <begin position="272"/>
        <end position="280"/>
    </location>
</feature>
<feature type="strand" evidence="12">
    <location>
        <begin position="285"/>
        <end position="288"/>
    </location>
</feature>
<feature type="turn" evidence="13">
    <location>
        <begin position="294"/>
        <end position="296"/>
    </location>
</feature>
<feature type="helix" evidence="12">
    <location>
        <begin position="298"/>
        <end position="309"/>
    </location>
</feature>
<feature type="strand" evidence="15">
    <location>
        <begin position="310"/>
        <end position="312"/>
    </location>
</feature>
<feature type="helix" evidence="12">
    <location>
        <begin position="314"/>
        <end position="329"/>
    </location>
</feature>
<feature type="helix" evidence="12">
    <location>
        <begin position="334"/>
        <end position="341"/>
    </location>
</feature>
<feature type="helix" evidence="12">
    <location>
        <begin position="344"/>
        <end position="359"/>
    </location>
</feature>
<feature type="helix" evidence="12">
    <location>
        <begin position="364"/>
        <end position="376"/>
    </location>
</feature>
<organism>
    <name type="scientific">Pseudomonas aeruginosa (strain ATCC 15692 / DSM 22644 / CIP 104116 / JCM 14847 / LMG 12228 / 1C / PRS 101 / PAO1)</name>
    <dbReference type="NCBI Taxonomy" id="208964"/>
    <lineage>
        <taxon>Bacteria</taxon>
        <taxon>Pseudomonadati</taxon>
        <taxon>Pseudomonadota</taxon>
        <taxon>Gammaproteobacteria</taxon>
        <taxon>Pseudomonadales</taxon>
        <taxon>Pseudomonadaceae</taxon>
        <taxon>Pseudomonas</taxon>
    </lineage>
</organism>
<gene>
    <name evidence="4" type="primary">earP</name>
    <name evidence="7" type="ordered locus">PA2852</name>
</gene>
<name>EARP_PSEAE</name>
<reference key="1">
    <citation type="journal article" date="2000" name="Nature">
        <title>Complete genome sequence of Pseudomonas aeruginosa PAO1, an opportunistic pathogen.</title>
        <authorList>
            <person name="Stover C.K."/>
            <person name="Pham X.-Q.T."/>
            <person name="Erwin A.L."/>
            <person name="Mizoguchi S.D."/>
            <person name="Warrener P."/>
            <person name="Hickey M.J."/>
            <person name="Brinkman F.S.L."/>
            <person name="Hufnagle W.O."/>
            <person name="Kowalik D.J."/>
            <person name="Lagrou M."/>
            <person name="Garber R.L."/>
            <person name="Goltry L."/>
            <person name="Tolentino E."/>
            <person name="Westbrock-Wadman S."/>
            <person name="Yuan Y."/>
            <person name="Brody L.L."/>
            <person name="Coulter S.N."/>
            <person name="Folger K.R."/>
            <person name="Kas A."/>
            <person name="Larbig K."/>
            <person name="Lim R.M."/>
            <person name="Smith K.A."/>
            <person name="Spencer D.H."/>
            <person name="Wong G.K.-S."/>
            <person name="Wu Z."/>
            <person name="Paulsen I.T."/>
            <person name="Reizer J."/>
            <person name="Saier M.H. Jr."/>
            <person name="Hancock R.E.W."/>
            <person name="Lory S."/>
            <person name="Olson M.V."/>
        </authorList>
    </citation>
    <scope>NUCLEOTIDE SEQUENCE [LARGE SCALE GENOMIC DNA]</scope>
    <source>
        <strain>ATCC 15692 / DSM 22644 / CIP 104116 / JCM 14847 / LMG 12228 / 1C / PRS 101 / PAO1</strain>
    </source>
</reference>
<reference key="2">
    <citation type="journal article" date="2015" name="MBio">
        <title>Cyclic rhamnosylated elongation factor P establishes antibiotic resistance in Pseudomonas aeruginosa.</title>
        <authorList>
            <person name="Rajkovic A."/>
            <person name="Erickson S."/>
            <person name="Witzky A."/>
            <person name="Branson O.E."/>
            <person name="Seo J."/>
            <person name="Gafken P.R."/>
            <person name="Frietas M.A."/>
            <person name="Whitelegge J.P."/>
            <person name="Faull K.F."/>
            <person name="Navarre W."/>
            <person name="Darwin A.J."/>
            <person name="Ibba M."/>
        </authorList>
    </citation>
    <scope>FUNCTION</scope>
    <scope>CATALYTIC ACTIVITY</scope>
    <source>
        <strain>ATCC 15692 / DSM 22644 / CIP 104116 / JCM 14847 / LMG 12228 / 1C / PRS 101 / PAO1</strain>
    </source>
</reference>
<reference key="3">
    <citation type="journal article" date="2015" name="Nat. Chem. Biol.">
        <title>Arginine-rhamnosylation as new strategy to activate translation elongation factor P.</title>
        <authorList>
            <person name="Lassak J."/>
            <person name="Keilhauer E.C."/>
            <person name="Fuerst M."/>
            <person name="Wuichet K."/>
            <person name="Goedeke J."/>
            <person name="Starosta A.L."/>
            <person name="Chen J.M."/>
            <person name="Soegaard-Andersen L."/>
            <person name="Rohr J."/>
            <person name="Wilson D.N."/>
            <person name="Haeussler S."/>
            <person name="Mann M."/>
            <person name="Jung K."/>
        </authorList>
    </citation>
    <scope>DISRUPTION PHENOTYPE</scope>
    <source>
        <strain>ATCC 15692 / DSM 22644 / CIP 104116 / JCM 14847 / LMG 12228 / 1C / PRS 101 / PAO1</strain>
    </source>
</reference>
<reference evidence="8 9 10" key="4">
    <citation type="journal article" date="2019" name="J. Bacteriol.">
        <title>Complex structure of Pseudomonas aeruginosa arginine rhamnosyltransferase EarP with its acceptor elongation factor P.</title>
        <authorList>
            <person name="He C."/>
            <person name="Liu N."/>
            <person name="Li F."/>
            <person name="Jia X."/>
            <person name="Peng H."/>
            <person name="Liu Y."/>
            <person name="Xiao Y."/>
        </authorList>
    </citation>
    <scope>X-RAY CRYSTALLOGRAPHY (1.75 ANGSTROMS) IN COMPLEX WITH DTDP-BETA-L-RHAMNOSE; DTDP AND EFP</scope>
    <scope>FUNCTION</scope>
    <scope>CATALYTIC ACTIVITY</scope>
    <scope>DOMAIN</scope>
    <scope>ACTIVE SITES</scope>
    <scope>MUTAGENESIS OF ASP-12; ASP-16; TYR-112 AND GLU-272</scope>
    <source>
        <strain>ATCC 15692 / DSM 22644 / CIP 104116 / JCM 14847 / LMG 12228 / 1C / PRS 101 / PAO1</strain>
    </source>
</reference>
<proteinExistence type="evidence at protein level"/>
<comment type="function">
    <text evidence="2 3">Protein-arginine rhamnosyltransferase that catalyzes the transfer of a single rhamnose to elongation factor P (EF-P) on 'Lys-32', a modification required for EF-P-dependent rescue of polyproline stalled ribosomes.</text>
</comment>
<comment type="catalytic activity">
    <reaction evidence="3 6">
        <text>dTDP-beta-L-rhamnose + L-arginyl-[protein] = N(omega)-(alpha-L-rhamnosyl)-L-arginyl-[protein] + dTDP + H(+)</text>
        <dbReference type="Rhea" id="RHEA:66692"/>
        <dbReference type="Rhea" id="RHEA-COMP:10532"/>
        <dbReference type="Rhea" id="RHEA-COMP:17096"/>
        <dbReference type="ChEBI" id="CHEBI:15378"/>
        <dbReference type="ChEBI" id="CHEBI:29965"/>
        <dbReference type="ChEBI" id="CHEBI:57510"/>
        <dbReference type="ChEBI" id="CHEBI:58369"/>
        <dbReference type="ChEBI" id="CHEBI:167445"/>
    </reaction>
    <physiologicalReaction direction="left-to-right" evidence="3 6">
        <dbReference type="Rhea" id="RHEA:66693"/>
    </physiologicalReaction>
</comment>
<comment type="domain">
    <text evidence="3">Adopts a GT-B fold and acts as an inverting enzyme that converts the beta-configuration in the dTDP-beta-L-rhamnose donor to the alpha configuration in the N-linked (Rha) arginine product.</text>
</comment>
<comment type="disruption phenotype">
    <text evidence="1">Reduced bacterial fitness and reduced pathogenicity.</text>
</comment>
<comment type="similarity">
    <text evidence="5">Belongs to the glycosyltransferase 104 family.</text>
</comment>
<dbReference type="EC" id="2.4.1.-" evidence="3 6"/>
<dbReference type="EMBL" id="AE004091">
    <property type="protein sequence ID" value="AAG06240.1"/>
    <property type="molecule type" value="Genomic_DNA"/>
</dbReference>
<dbReference type="PIR" id="G83290">
    <property type="entry name" value="G83290"/>
</dbReference>
<dbReference type="RefSeq" id="NP_251542.1">
    <property type="nucleotide sequence ID" value="NC_002516.2"/>
</dbReference>
<dbReference type="RefSeq" id="WP_003114754.1">
    <property type="nucleotide sequence ID" value="NZ_QZGE01000011.1"/>
</dbReference>
<dbReference type="PDB" id="6J7J">
    <property type="method" value="X-ray"/>
    <property type="resolution" value="1.75 A"/>
    <property type="chains" value="A=1-376"/>
</dbReference>
<dbReference type="PDB" id="6J7K">
    <property type="method" value="X-ray"/>
    <property type="resolution" value="2.15 A"/>
    <property type="chains" value="A=1-376"/>
</dbReference>
<dbReference type="PDB" id="6J7L">
    <property type="method" value="X-ray"/>
    <property type="resolution" value="1.85 A"/>
    <property type="chains" value="A=1-376"/>
</dbReference>
<dbReference type="PDB" id="6J7M">
    <property type="method" value="X-ray"/>
    <property type="resolution" value="2.30 A"/>
    <property type="chains" value="A/C=1-376"/>
</dbReference>
<dbReference type="PDBsum" id="6J7J"/>
<dbReference type="PDBsum" id="6J7K"/>
<dbReference type="PDBsum" id="6J7L"/>
<dbReference type="PDBsum" id="6J7M"/>
<dbReference type="SMR" id="Q9HZZ1"/>
<dbReference type="STRING" id="208964.PA2852"/>
<dbReference type="PaxDb" id="208964-PA2852"/>
<dbReference type="GeneID" id="882634"/>
<dbReference type="KEGG" id="pae:PA2852"/>
<dbReference type="PATRIC" id="fig|208964.12.peg.2992"/>
<dbReference type="PseudoCAP" id="PA2852"/>
<dbReference type="HOGENOM" id="CLU_060250_0_0_6"/>
<dbReference type="InParanoid" id="Q9HZZ1"/>
<dbReference type="OrthoDB" id="209085at2"/>
<dbReference type="PhylomeDB" id="Q9HZZ1"/>
<dbReference type="BioCyc" id="PAER208964:G1FZ6-2901-MONOMER"/>
<dbReference type="Proteomes" id="UP000002438">
    <property type="component" value="Chromosome"/>
</dbReference>
<dbReference type="GO" id="GO:0106361">
    <property type="term" value="F:protein-arginine rhamnosyltransferase activity"/>
    <property type="evidence" value="ECO:0000314"/>
    <property type="project" value="UniProtKB"/>
</dbReference>
<dbReference type="InterPro" id="IPR016633">
    <property type="entry name" value="EarP"/>
</dbReference>
<dbReference type="NCBIfam" id="TIGR03837">
    <property type="entry name" value="efp_Arg_rhamno"/>
    <property type="match status" value="1"/>
</dbReference>
<dbReference type="Pfam" id="PF10093">
    <property type="entry name" value="EarP"/>
    <property type="match status" value="1"/>
</dbReference>
<dbReference type="PIRSF" id="PIRSF015557">
    <property type="entry name" value="UCP015557"/>
    <property type="match status" value="1"/>
</dbReference>
<keyword id="KW-0002">3D-structure</keyword>
<keyword id="KW-0328">Glycosyltransferase</keyword>
<keyword id="KW-1185">Reference proteome</keyword>
<keyword id="KW-0808">Transferase</keyword>